<accession>Q5WYH2</accession>
<proteinExistence type="inferred from homology"/>
<comment type="function">
    <text evidence="1">Involved in transcription antitermination. Required for transcription of ribosomal RNA (rRNA) genes. Binds specifically to the boxA antiterminator sequence of the ribosomal RNA (rrn) operons.</text>
</comment>
<comment type="similarity">
    <text evidence="1">Belongs to the NusB family.</text>
</comment>
<protein>
    <recommendedName>
        <fullName evidence="1">Transcription antitermination protein NusB</fullName>
    </recommendedName>
    <alternativeName>
        <fullName evidence="1">Antitermination factor NusB</fullName>
    </alternativeName>
</protein>
<evidence type="ECO:0000255" key="1">
    <source>
        <dbReference type="HAMAP-Rule" id="MF_00073"/>
    </source>
</evidence>
<sequence length="147" mass="16968">MEKQSIRGKRRARKFALQALYQWLMSGTDLHEIEAQFRTINNMDKVDGEYFCRLLYGIPTHVEALEASLLPYLDREINALNPIELTVLRIGSFELFHCPEIPYKVILDESVSLTKEFGSQEGYRYVNGVLNNLAKQVRSVEVSLDNE</sequence>
<keyword id="KW-0694">RNA-binding</keyword>
<keyword id="KW-0804">Transcription</keyword>
<keyword id="KW-0889">Transcription antitermination</keyword>
<keyword id="KW-0805">Transcription regulation</keyword>
<organism>
    <name type="scientific">Legionella pneumophila (strain Lens)</name>
    <dbReference type="NCBI Taxonomy" id="297245"/>
    <lineage>
        <taxon>Bacteria</taxon>
        <taxon>Pseudomonadati</taxon>
        <taxon>Pseudomonadota</taxon>
        <taxon>Gammaproteobacteria</taxon>
        <taxon>Legionellales</taxon>
        <taxon>Legionellaceae</taxon>
        <taxon>Legionella</taxon>
    </lineage>
</organism>
<gene>
    <name evidence="1" type="primary">nusB</name>
    <name type="ordered locus">lpl0764</name>
</gene>
<reference key="1">
    <citation type="journal article" date="2004" name="Nat. Genet.">
        <title>Evidence in the Legionella pneumophila genome for exploitation of host cell functions and high genome plasticity.</title>
        <authorList>
            <person name="Cazalet C."/>
            <person name="Rusniok C."/>
            <person name="Brueggemann H."/>
            <person name="Zidane N."/>
            <person name="Magnier A."/>
            <person name="Ma L."/>
            <person name="Tichit M."/>
            <person name="Jarraud S."/>
            <person name="Bouchier C."/>
            <person name="Vandenesch F."/>
            <person name="Kunst F."/>
            <person name="Etienne J."/>
            <person name="Glaser P."/>
            <person name="Buchrieser C."/>
        </authorList>
    </citation>
    <scope>NUCLEOTIDE SEQUENCE [LARGE SCALE GENOMIC DNA]</scope>
    <source>
        <strain>Lens</strain>
    </source>
</reference>
<name>NUSB_LEGPL</name>
<dbReference type="EMBL" id="CR628337">
    <property type="protein sequence ID" value="CAH14998.1"/>
    <property type="molecule type" value="Genomic_DNA"/>
</dbReference>
<dbReference type="RefSeq" id="WP_011213300.1">
    <property type="nucleotide sequence ID" value="NC_006369.1"/>
</dbReference>
<dbReference type="SMR" id="Q5WYH2"/>
<dbReference type="GeneID" id="57034720"/>
<dbReference type="KEGG" id="lpf:lpl0764"/>
<dbReference type="LegioList" id="lpl0764"/>
<dbReference type="HOGENOM" id="CLU_087843_4_1_6"/>
<dbReference type="Proteomes" id="UP000002517">
    <property type="component" value="Chromosome"/>
</dbReference>
<dbReference type="GO" id="GO:0005829">
    <property type="term" value="C:cytosol"/>
    <property type="evidence" value="ECO:0007669"/>
    <property type="project" value="TreeGrafter"/>
</dbReference>
<dbReference type="GO" id="GO:0003723">
    <property type="term" value="F:RNA binding"/>
    <property type="evidence" value="ECO:0007669"/>
    <property type="project" value="UniProtKB-UniRule"/>
</dbReference>
<dbReference type="GO" id="GO:0006353">
    <property type="term" value="P:DNA-templated transcription termination"/>
    <property type="evidence" value="ECO:0007669"/>
    <property type="project" value="UniProtKB-UniRule"/>
</dbReference>
<dbReference type="GO" id="GO:0031564">
    <property type="term" value="P:transcription antitermination"/>
    <property type="evidence" value="ECO:0007669"/>
    <property type="project" value="UniProtKB-KW"/>
</dbReference>
<dbReference type="Gene3D" id="1.10.940.10">
    <property type="entry name" value="NusB-like"/>
    <property type="match status" value="1"/>
</dbReference>
<dbReference type="HAMAP" id="MF_00073">
    <property type="entry name" value="NusB"/>
    <property type="match status" value="1"/>
</dbReference>
<dbReference type="InterPro" id="IPR035926">
    <property type="entry name" value="NusB-like_sf"/>
</dbReference>
<dbReference type="InterPro" id="IPR011605">
    <property type="entry name" value="NusB_fam"/>
</dbReference>
<dbReference type="InterPro" id="IPR006027">
    <property type="entry name" value="NusB_RsmB_TIM44"/>
</dbReference>
<dbReference type="NCBIfam" id="TIGR01951">
    <property type="entry name" value="nusB"/>
    <property type="match status" value="1"/>
</dbReference>
<dbReference type="PANTHER" id="PTHR11078:SF3">
    <property type="entry name" value="ANTITERMINATION NUSB DOMAIN-CONTAINING PROTEIN"/>
    <property type="match status" value="1"/>
</dbReference>
<dbReference type="PANTHER" id="PTHR11078">
    <property type="entry name" value="N UTILIZATION SUBSTANCE PROTEIN B-RELATED"/>
    <property type="match status" value="1"/>
</dbReference>
<dbReference type="Pfam" id="PF01029">
    <property type="entry name" value="NusB"/>
    <property type="match status" value="1"/>
</dbReference>
<dbReference type="SUPFAM" id="SSF48013">
    <property type="entry name" value="NusB-like"/>
    <property type="match status" value="1"/>
</dbReference>
<feature type="chain" id="PRO_0000265537" description="Transcription antitermination protein NusB">
    <location>
        <begin position="1"/>
        <end position="147"/>
    </location>
</feature>